<dbReference type="EMBL" id="DQ139904">
    <property type="protein sequence ID" value="AAZ75610.1"/>
    <property type="molecule type" value="mRNA"/>
</dbReference>
<dbReference type="SMR" id="Q2XXP1"/>
<dbReference type="GO" id="GO:0005576">
    <property type="term" value="C:extracellular region"/>
    <property type="evidence" value="ECO:0007669"/>
    <property type="project" value="UniProtKB-SubCell"/>
</dbReference>
<dbReference type="GO" id="GO:0005246">
    <property type="term" value="F:calcium channel regulator activity"/>
    <property type="evidence" value="ECO:0007669"/>
    <property type="project" value="UniProtKB-KW"/>
</dbReference>
<dbReference type="GO" id="GO:0015459">
    <property type="term" value="F:potassium channel regulator activity"/>
    <property type="evidence" value="ECO:0007669"/>
    <property type="project" value="UniProtKB-KW"/>
</dbReference>
<dbReference type="GO" id="GO:0090729">
    <property type="term" value="F:toxin activity"/>
    <property type="evidence" value="ECO:0007669"/>
    <property type="project" value="UniProtKB-KW"/>
</dbReference>
<dbReference type="CDD" id="cd05383">
    <property type="entry name" value="CAP_CRISP"/>
    <property type="match status" value="1"/>
</dbReference>
<dbReference type="FunFam" id="1.10.10.740:FF:000001">
    <property type="entry name" value="Cysteine-rich secretory protein 2"/>
    <property type="match status" value="1"/>
</dbReference>
<dbReference type="FunFam" id="3.40.33.10:FF:000005">
    <property type="entry name" value="Cysteine-rich secretory protein 2"/>
    <property type="match status" value="1"/>
</dbReference>
<dbReference type="Gene3D" id="3.40.33.10">
    <property type="entry name" value="CAP"/>
    <property type="match status" value="1"/>
</dbReference>
<dbReference type="Gene3D" id="1.10.10.740">
    <property type="entry name" value="Crisp domain"/>
    <property type="match status" value="1"/>
</dbReference>
<dbReference type="InterPro" id="IPR018244">
    <property type="entry name" value="Allrgn_V5/Tpx1_CS"/>
</dbReference>
<dbReference type="InterPro" id="IPR014044">
    <property type="entry name" value="CAP_dom"/>
</dbReference>
<dbReference type="InterPro" id="IPR035940">
    <property type="entry name" value="CAP_sf"/>
</dbReference>
<dbReference type="InterPro" id="IPR042076">
    <property type="entry name" value="Crisp-like_dom"/>
</dbReference>
<dbReference type="InterPro" id="IPR001283">
    <property type="entry name" value="CRISP-related"/>
</dbReference>
<dbReference type="InterPro" id="IPR013871">
    <property type="entry name" value="Cysteine_rich_secretory"/>
</dbReference>
<dbReference type="InterPro" id="IPR034117">
    <property type="entry name" value="SCP_CRISP"/>
</dbReference>
<dbReference type="InterPro" id="IPR003582">
    <property type="entry name" value="ShKT_dom"/>
</dbReference>
<dbReference type="InterPro" id="IPR002413">
    <property type="entry name" value="V5_allergen-like"/>
</dbReference>
<dbReference type="PANTHER" id="PTHR10334">
    <property type="entry name" value="CYSTEINE-RICH SECRETORY PROTEIN-RELATED"/>
    <property type="match status" value="1"/>
</dbReference>
<dbReference type="Pfam" id="PF00188">
    <property type="entry name" value="CAP"/>
    <property type="match status" value="1"/>
</dbReference>
<dbReference type="Pfam" id="PF08562">
    <property type="entry name" value="Crisp"/>
    <property type="match status" value="1"/>
</dbReference>
<dbReference type="PRINTS" id="PR00838">
    <property type="entry name" value="V5ALLERGEN"/>
</dbReference>
<dbReference type="PRINTS" id="PR00837">
    <property type="entry name" value="V5TPXLIKE"/>
</dbReference>
<dbReference type="SMART" id="SM00198">
    <property type="entry name" value="SCP"/>
    <property type="match status" value="1"/>
</dbReference>
<dbReference type="SUPFAM" id="SSF57546">
    <property type="entry name" value="Crisp domain-like"/>
    <property type="match status" value="1"/>
</dbReference>
<dbReference type="SUPFAM" id="SSF55797">
    <property type="entry name" value="PR-1-like"/>
    <property type="match status" value="1"/>
</dbReference>
<dbReference type="PROSITE" id="PS01009">
    <property type="entry name" value="CRISP_1"/>
    <property type="match status" value="1"/>
</dbReference>
<dbReference type="PROSITE" id="PS51670">
    <property type="entry name" value="SHKT"/>
    <property type="match status" value="1"/>
</dbReference>
<name>CRVPB_VARVA</name>
<accession>Q2XXP1</accession>
<organism>
    <name type="scientific">Varanus varius</name>
    <name type="common">Lace monitor lizard</name>
    <name type="synonym">Lacerta varia</name>
    <dbReference type="NCBI Taxonomy" id="8559"/>
    <lineage>
        <taxon>Eukaryota</taxon>
        <taxon>Metazoa</taxon>
        <taxon>Chordata</taxon>
        <taxon>Craniata</taxon>
        <taxon>Vertebrata</taxon>
        <taxon>Euteleostomi</taxon>
        <taxon>Lepidosauria</taxon>
        <taxon>Squamata</taxon>
        <taxon>Bifurcata</taxon>
        <taxon>Unidentata</taxon>
        <taxon>Episquamata</taxon>
        <taxon>Toxicofera</taxon>
        <taxon>Anguimorpha</taxon>
        <taxon>Paleoanguimorpha</taxon>
        <taxon>Varanoidea</taxon>
        <taxon>Varanidae</taxon>
        <taxon>Varanus</taxon>
    </lineage>
</organism>
<reference key="1">
    <citation type="journal article" date="2006" name="Nature">
        <title>Early evolution of the venom system in lizards and snakes.</title>
        <authorList>
            <person name="Fry B.G."/>
            <person name="Vidal N."/>
            <person name="Norman J.A."/>
            <person name="Vonk F.J."/>
            <person name="Scheib H."/>
            <person name="Ramjan S.F.R."/>
            <person name="Kuruppu S."/>
            <person name="Fung K."/>
            <person name="Blair Hedges S."/>
            <person name="Richardson M.K."/>
            <person name="Hodgson W.C."/>
            <person name="Ignjatovic V."/>
            <person name="Summerhayes R."/>
            <person name="Kochva E."/>
        </authorList>
    </citation>
    <scope>NUCLEOTIDE SEQUENCE [LARGE SCALE MRNA]</scope>
    <source>
        <tissue>Venom gland</tissue>
    </source>
</reference>
<feature type="signal peptide" evidence="2">
    <location>
        <begin position="1"/>
        <end position="19"/>
    </location>
</feature>
<feature type="chain" id="PRO_0000380662" description="Cysteine-rich venom protein VAR11">
    <location>
        <begin position="20"/>
        <end position="242"/>
    </location>
</feature>
<feature type="domain" description="SCP">
    <location>
        <begin position="41"/>
        <end position="169"/>
    </location>
</feature>
<feature type="domain" description="ShKT" evidence="3">
    <location>
        <begin position="205"/>
        <end position="237"/>
    </location>
</feature>
<feature type="disulfide bond" evidence="3">
    <location>
        <begin position="77"/>
        <end position="156"/>
    </location>
</feature>
<feature type="disulfide bond" evidence="3">
    <location>
        <begin position="95"/>
        <end position="170"/>
    </location>
</feature>
<feature type="disulfide bond" evidence="3">
    <location>
        <begin position="151"/>
        <end position="167"/>
    </location>
</feature>
<feature type="disulfide bond" evidence="3">
    <location>
        <begin position="189"/>
        <end position="196"/>
    </location>
</feature>
<feature type="disulfide bond" evidence="3">
    <location>
        <begin position="192"/>
        <end position="201"/>
    </location>
</feature>
<feature type="disulfide bond" evidence="3">
    <location>
        <begin position="205"/>
        <end position="237"/>
    </location>
</feature>
<feature type="disulfide bond" evidence="3">
    <location>
        <begin position="214"/>
        <end position="231"/>
    </location>
</feature>
<feature type="disulfide bond" evidence="3">
    <location>
        <begin position="223"/>
        <end position="235"/>
    </location>
</feature>
<sequence length="242" mass="26944">MILLKLYLTLAAILCQSRGMTSLDLDDLMTTNPEIQNEIINKHNDLRRTVDPPAKNMLKMSWDNIIAESAKRAALRCNYKEHTSIAERTIGGVVCGENHFMSSNPRTWSSSIQSWFDERNSFMFGFGPTIPGVMVGHYTQVVWYKSYKVGCAINLCPAQSLKYFQVCQYCPGGNVAGRKYEPYTIGEPCAACPKDCDNGLCTNPCAYNDDYTSCPDLTKQVGCNHPVTANCKASCQCTTEIQ</sequence>
<keyword id="KW-0108">Calcium channel impairing toxin</keyword>
<keyword id="KW-1015">Disulfide bond</keyword>
<keyword id="KW-0872">Ion channel impairing toxin</keyword>
<keyword id="KW-0528">Neurotoxin</keyword>
<keyword id="KW-0632">Potassium channel impairing toxin</keyword>
<keyword id="KW-0964">Secreted</keyword>
<keyword id="KW-0732">Signal</keyword>
<keyword id="KW-0800">Toxin</keyword>
<proteinExistence type="evidence at transcript level"/>
<protein>
    <recommendedName>
        <fullName>Cysteine-rich venom protein VAR11</fullName>
        <shortName>CRVP</shortName>
    </recommendedName>
    <alternativeName>
        <fullName>Cysteine-rich secretory protein VAR11</fullName>
        <shortName>CRISP-VAR11</shortName>
    </alternativeName>
</protein>
<evidence type="ECO:0000250" key="1"/>
<evidence type="ECO:0000255" key="2"/>
<evidence type="ECO:0000255" key="3">
    <source>
        <dbReference type="PROSITE-ProRule" id="PRU01005"/>
    </source>
</evidence>
<evidence type="ECO:0000305" key="4"/>
<comment type="function">
    <text evidence="1">Blocks ryanodine receptors, and potassium channels.</text>
</comment>
<comment type="subcellular location">
    <subcellularLocation>
        <location evidence="1">Secreted</location>
    </subcellularLocation>
</comment>
<comment type="tissue specificity">
    <text>Expressed by the venom gland.</text>
</comment>
<comment type="similarity">
    <text evidence="4">Belongs to the CRISP family.</text>
</comment>